<name>CP2F2_MOUSE</name>
<evidence type="ECO:0000250" key="1"/>
<evidence type="ECO:0000269" key="2">
    <source>
    </source>
</evidence>
<evidence type="ECO:0000269" key="3">
    <source>
    </source>
</evidence>
<evidence type="ECO:0000305" key="4"/>
<gene>
    <name type="primary">Cyp2f2</name>
    <name type="synonym">Cyp2f-2</name>
</gene>
<reference key="1">
    <citation type="journal article" date="1990" name="Drug Metab. Dispos.">
        <title>Isozymes of cytochrome P-450 that metabolize naphthalene in liver and lung of untreated mice.</title>
        <authorList>
            <person name="Nagata K."/>
            <person name="Martin B.M."/>
            <person name="Gillette J.R."/>
            <person name="Sasame H.A."/>
        </authorList>
    </citation>
    <scope>NUCLEOTIDE SEQUENCE [MRNA]</scope>
    <scope>FUNCTION</scope>
    <scope>TISSUE SPECIFICITY</scope>
</reference>
<reference key="2">
    <citation type="journal article" date="1991" name="Biochemistry">
        <title>Mouse pulmonary cytochrome P-450 naphthalene hydroxylase: cDNA cloning, sequence, and expression in Saccharomyces cerevisiae.</title>
        <authorList>
            <person name="Ritter J.K."/>
            <person name="Owens I.S."/>
            <person name="Negishi M."/>
            <person name="Nagata K."/>
            <person name="Sheen Y.Y."/>
            <person name="Gillette J.R."/>
            <person name="Sasame H.A."/>
        </authorList>
    </citation>
    <scope>NUCLEOTIDE SEQUENCE [MRNA]</scope>
    <scope>FUNCTION</scope>
    <scope>TISSUE SPECIFICITY</scope>
    <source>
        <strain>SWR/J</strain>
        <tissue>Lung</tissue>
    </source>
</reference>
<reference key="3">
    <citation type="journal article" date="2004" name="Genome Res.">
        <title>The status, quality, and expansion of the NIH full-length cDNA project: the Mammalian Gene Collection (MGC).</title>
        <authorList>
            <consortium name="The MGC Project Team"/>
        </authorList>
    </citation>
    <scope>NUCLEOTIDE SEQUENCE [LARGE SCALE MRNA]</scope>
    <source>
        <strain>FVB/N</strain>
        <tissue>Liver</tissue>
    </source>
</reference>
<reference key="4">
    <citation type="journal article" date="2010" name="Cell">
        <title>A tissue-specific atlas of mouse protein phosphorylation and expression.</title>
        <authorList>
            <person name="Huttlin E.L."/>
            <person name="Jedrychowski M.P."/>
            <person name="Elias J.E."/>
            <person name="Goswami T."/>
            <person name="Rad R."/>
            <person name="Beausoleil S.A."/>
            <person name="Villen J."/>
            <person name="Haas W."/>
            <person name="Sowa M.E."/>
            <person name="Gygi S.P."/>
        </authorList>
    </citation>
    <scope>IDENTIFICATION BY MASS SPECTROMETRY [LARGE SCALE ANALYSIS]</scope>
    <source>
        <tissue>Liver</tissue>
        <tissue>Lung</tissue>
    </source>
</reference>
<protein>
    <recommendedName>
        <fullName>Cytochrome P450 2F2</fullName>
        <ecNumber>1.14.14.-</ecNumber>
    </recommendedName>
    <alternativeName>
        <fullName>CYPIIF2</fullName>
    </alternativeName>
    <alternativeName>
        <fullName>Cytochrome P450-NAH-2</fullName>
    </alternativeName>
    <alternativeName>
        <fullName>Naphthalene dehydrogenase</fullName>
    </alternativeName>
    <alternativeName>
        <fullName>Naphthalene hydroxylase</fullName>
    </alternativeName>
</protein>
<organism>
    <name type="scientific">Mus musculus</name>
    <name type="common">Mouse</name>
    <dbReference type="NCBI Taxonomy" id="10090"/>
    <lineage>
        <taxon>Eukaryota</taxon>
        <taxon>Metazoa</taxon>
        <taxon>Chordata</taxon>
        <taxon>Craniata</taxon>
        <taxon>Vertebrata</taxon>
        <taxon>Euteleostomi</taxon>
        <taxon>Mammalia</taxon>
        <taxon>Eutheria</taxon>
        <taxon>Euarchontoglires</taxon>
        <taxon>Glires</taxon>
        <taxon>Rodentia</taxon>
        <taxon>Myomorpha</taxon>
        <taxon>Muroidea</taxon>
        <taxon>Muridae</taxon>
        <taxon>Murinae</taxon>
        <taxon>Mus</taxon>
        <taxon>Mus</taxon>
    </lineage>
</organism>
<sequence length="491" mass="55949">MDGVSTAILLLLLAVISLSLTFSSRGKGQLPPGPKPLPILGNLLQLRSQDLLTSLTKLSKEYGSVFTVYLGSRPVIVLSGYQTVKEALVDKGEEFSGRGAYPVFFNFTRGNGIAFSDGERWKILRRFSVQILRNFGMGKRSIEERILEEGSFLLEVLRKMEGKPFDPVFILSRSVSNIICSVVFGSRFDYDDERLLTIIHFINDNFKIMSSPWGEMYNIFPSVLDWIPGPHKRLFRNFGGMKDLIARSVREHQDSLDPNSPRDFIDCFLTKMAQEKQDPLSHFNMDTLLMTTHNLLFGGTETVGTTLRHAFLILMKYPKVQARVQEEIDRVVGRSRMPTLEDRTSMPYTDAVIHEVQRFADVIPMNLPHRVTRDTPFRGFLIPKGTDVITLLNTVHYDSDQFKTPQEFNPEHFLDDNHSFKKSPAFMPFSAGRRLCLGEPLARMELFIYFTSILQNFTLQPLVDPEDIDLTPLSSGLGNLPRPFQLCMHIR</sequence>
<proteinExistence type="evidence at protein level"/>
<feature type="chain" id="PRO_0000051760" description="Cytochrome P450 2F2">
    <location>
        <begin position="1"/>
        <end position="491"/>
    </location>
</feature>
<feature type="binding site" description="axial binding residue" evidence="1">
    <location>
        <position position="436"/>
    </location>
    <ligand>
        <name>heme</name>
        <dbReference type="ChEBI" id="CHEBI:30413"/>
    </ligand>
    <ligandPart>
        <name>Fe</name>
        <dbReference type="ChEBI" id="CHEBI:18248"/>
    </ligandPart>
</feature>
<accession>P33267</accession>
<keyword id="KW-0256">Endoplasmic reticulum</keyword>
<keyword id="KW-0349">Heme</keyword>
<keyword id="KW-0408">Iron</keyword>
<keyword id="KW-0472">Membrane</keyword>
<keyword id="KW-0479">Metal-binding</keyword>
<keyword id="KW-0492">Microsome</keyword>
<keyword id="KW-0503">Monooxygenase</keyword>
<keyword id="KW-0560">Oxidoreductase</keyword>
<keyword id="KW-1185">Reference proteome</keyword>
<dbReference type="EC" id="1.14.14.-"/>
<dbReference type="EMBL" id="M77497">
    <property type="protein sequence ID" value="AAA37517.1"/>
    <property type="status" value="ALT_SEQ"/>
    <property type="molecule type" value="mRNA"/>
</dbReference>
<dbReference type="EMBL" id="BC011089">
    <property type="protein sequence ID" value="AAH11089.1"/>
    <property type="molecule type" value="mRNA"/>
</dbReference>
<dbReference type="EMBL" id="BC024742">
    <property type="protein sequence ID" value="AAH24742.1"/>
    <property type="molecule type" value="mRNA"/>
</dbReference>
<dbReference type="CCDS" id="CCDS21010.1"/>
<dbReference type="PIR" id="A39302">
    <property type="entry name" value="A39302"/>
</dbReference>
<dbReference type="RefSeq" id="NP_031843.2">
    <property type="nucleotide sequence ID" value="NM_007817.3"/>
</dbReference>
<dbReference type="SMR" id="P33267"/>
<dbReference type="BioGRID" id="199024">
    <property type="interactions" value="24"/>
</dbReference>
<dbReference type="FunCoup" id="P33267">
    <property type="interactions" value="1150"/>
</dbReference>
<dbReference type="STRING" id="10090.ENSMUSP00000003100"/>
<dbReference type="GlyGen" id="P33267">
    <property type="glycosylation" value="1 site, 1 O-linked glycan (1 site)"/>
</dbReference>
<dbReference type="iPTMnet" id="P33267"/>
<dbReference type="PhosphoSitePlus" id="P33267"/>
<dbReference type="SwissPalm" id="P33267"/>
<dbReference type="jPOST" id="P33267"/>
<dbReference type="PaxDb" id="10090-ENSMUSP00000003100"/>
<dbReference type="PeptideAtlas" id="P33267"/>
<dbReference type="ProteomicsDB" id="284151"/>
<dbReference type="Antibodypedia" id="30699">
    <property type="antibodies" value="110 antibodies from 26 providers"/>
</dbReference>
<dbReference type="Ensembl" id="ENSMUST00000003100.10">
    <property type="protein sequence ID" value="ENSMUSP00000003100.9"/>
    <property type="gene ID" value="ENSMUSG00000052974.9"/>
</dbReference>
<dbReference type="GeneID" id="13107"/>
<dbReference type="KEGG" id="mmu:13107"/>
<dbReference type="UCSC" id="uc009fuy.1">
    <property type="organism name" value="mouse"/>
</dbReference>
<dbReference type="AGR" id="MGI:88608"/>
<dbReference type="CTD" id="13107"/>
<dbReference type="MGI" id="MGI:88608">
    <property type="gene designation" value="Cyp2f2"/>
</dbReference>
<dbReference type="VEuPathDB" id="HostDB:ENSMUSG00000052974"/>
<dbReference type="eggNOG" id="KOG0156">
    <property type="taxonomic scope" value="Eukaryota"/>
</dbReference>
<dbReference type="GeneTree" id="ENSGT00940000162522"/>
<dbReference type="HOGENOM" id="CLU_001570_22_3_1"/>
<dbReference type="InParanoid" id="P33267"/>
<dbReference type="OMA" id="YVNAFIA"/>
<dbReference type="OrthoDB" id="1055148at2759"/>
<dbReference type="PhylomeDB" id="P33267"/>
<dbReference type="TreeFam" id="TF352043"/>
<dbReference type="Reactome" id="R-MMU-211935">
    <property type="pathway name" value="Fatty acids"/>
</dbReference>
<dbReference type="Reactome" id="R-MMU-211981">
    <property type="pathway name" value="Xenobiotics"/>
</dbReference>
<dbReference type="Reactome" id="R-MMU-211999">
    <property type="pathway name" value="CYP2E1 reactions"/>
</dbReference>
<dbReference type="BioGRID-ORCS" id="13107">
    <property type="hits" value="1 hit in 78 CRISPR screens"/>
</dbReference>
<dbReference type="ChiTaRS" id="Cyp2f2">
    <property type="organism name" value="mouse"/>
</dbReference>
<dbReference type="PRO" id="PR:P33267"/>
<dbReference type="Proteomes" id="UP000000589">
    <property type="component" value="Chromosome 7"/>
</dbReference>
<dbReference type="RNAct" id="P33267">
    <property type="molecule type" value="protein"/>
</dbReference>
<dbReference type="Bgee" id="ENSMUSG00000052974">
    <property type="expression patterns" value="Expressed in right lung and 126 other cell types or tissues"/>
</dbReference>
<dbReference type="ExpressionAtlas" id="P33267">
    <property type="expression patterns" value="baseline and differential"/>
</dbReference>
<dbReference type="GO" id="GO:0005789">
    <property type="term" value="C:endoplasmic reticulum membrane"/>
    <property type="evidence" value="ECO:0007669"/>
    <property type="project" value="UniProtKB-SubCell"/>
</dbReference>
<dbReference type="GO" id="GO:0020037">
    <property type="term" value="F:heme binding"/>
    <property type="evidence" value="ECO:0007669"/>
    <property type="project" value="InterPro"/>
</dbReference>
<dbReference type="GO" id="GO:0005506">
    <property type="term" value="F:iron ion binding"/>
    <property type="evidence" value="ECO:0007669"/>
    <property type="project" value="InterPro"/>
</dbReference>
<dbReference type="GO" id="GO:0016712">
    <property type="term" value="F:oxidoreductase activity, acting on paired donors, with incorporation or reduction of molecular oxygen, reduced flavin or flavoprotein as one donor, and incorporation of one atom of oxygen"/>
    <property type="evidence" value="ECO:0007669"/>
    <property type="project" value="Ensembl"/>
</dbReference>
<dbReference type="GO" id="GO:0019825">
    <property type="term" value="F:oxygen binding"/>
    <property type="evidence" value="ECO:0007669"/>
    <property type="project" value="InterPro"/>
</dbReference>
<dbReference type="GO" id="GO:1901170">
    <property type="term" value="P:naphthalene catabolic process"/>
    <property type="evidence" value="ECO:0000315"/>
    <property type="project" value="MGI"/>
</dbReference>
<dbReference type="GO" id="GO:0009636">
    <property type="term" value="P:response to toxic substance"/>
    <property type="evidence" value="ECO:0000315"/>
    <property type="project" value="MGI"/>
</dbReference>
<dbReference type="GO" id="GO:0018979">
    <property type="term" value="P:trichloroethylene metabolic process"/>
    <property type="evidence" value="ECO:0007669"/>
    <property type="project" value="Ensembl"/>
</dbReference>
<dbReference type="CDD" id="cd20669">
    <property type="entry name" value="Cyp2F"/>
    <property type="match status" value="1"/>
</dbReference>
<dbReference type="FunFam" id="1.10.630.10:FF:000001">
    <property type="entry name" value="Cytochrome P450, family 2"/>
    <property type="match status" value="1"/>
</dbReference>
<dbReference type="Gene3D" id="1.10.630.10">
    <property type="entry name" value="Cytochrome P450"/>
    <property type="match status" value="1"/>
</dbReference>
<dbReference type="InterPro" id="IPR001128">
    <property type="entry name" value="Cyt_P450"/>
</dbReference>
<dbReference type="InterPro" id="IPR017972">
    <property type="entry name" value="Cyt_P450_CS"/>
</dbReference>
<dbReference type="InterPro" id="IPR020469">
    <property type="entry name" value="Cyt_P450_CYP2_fam"/>
</dbReference>
<dbReference type="InterPro" id="IPR002401">
    <property type="entry name" value="Cyt_P450_E_grp-I"/>
</dbReference>
<dbReference type="InterPro" id="IPR036396">
    <property type="entry name" value="Cyt_P450_sf"/>
</dbReference>
<dbReference type="InterPro" id="IPR050182">
    <property type="entry name" value="Cytochrome_P450_fam2"/>
</dbReference>
<dbReference type="PANTHER" id="PTHR24300:SF275">
    <property type="entry name" value="CYTOCHROME P450 2F1"/>
    <property type="match status" value="1"/>
</dbReference>
<dbReference type="PANTHER" id="PTHR24300">
    <property type="entry name" value="CYTOCHROME P450 508A4-RELATED"/>
    <property type="match status" value="1"/>
</dbReference>
<dbReference type="Pfam" id="PF00067">
    <property type="entry name" value="p450"/>
    <property type="match status" value="1"/>
</dbReference>
<dbReference type="PRINTS" id="PR00463">
    <property type="entry name" value="EP450I"/>
</dbReference>
<dbReference type="PRINTS" id="PR01957">
    <property type="entry name" value="EP450ICYP2F"/>
</dbReference>
<dbReference type="PRINTS" id="PR00385">
    <property type="entry name" value="P450"/>
</dbReference>
<dbReference type="SUPFAM" id="SSF48264">
    <property type="entry name" value="Cytochrome P450"/>
    <property type="match status" value="1"/>
</dbReference>
<dbReference type="PROSITE" id="PS00086">
    <property type="entry name" value="CYTOCHROME_P450"/>
    <property type="match status" value="1"/>
</dbReference>
<comment type="function">
    <text evidence="2 3">Involved in the regio- and stereoselective transformation of naphthalene to trans-1R-hydroxy-2R-glutathionyl-1,2-dihydronaphthalene in the presence of glutathione and glutathione S-transferases. It specifically catalyzes the production of a very reactive and potentially toxic intermediate, the 2R,2S arene oxide, that is associated with necrosis of the unciliated bronchiolar epithelial cells or club cells in lung.</text>
</comment>
<comment type="cofactor">
    <cofactor evidence="1">
        <name>heme</name>
        <dbReference type="ChEBI" id="CHEBI:30413"/>
    </cofactor>
</comment>
<comment type="subcellular location">
    <subcellularLocation>
        <location>Endoplasmic reticulum membrane</location>
        <topology>Peripheral membrane protein</topology>
    </subcellularLocation>
    <subcellularLocation>
        <location>Microsome membrane</location>
        <topology>Peripheral membrane protein</topology>
    </subcellularLocation>
</comment>
<comment type="tissue specificity">
    <text evidence="2 3">Club cells in lung and liver.</text>
</comment>
<comment type="similarity">
    <text evidence="4">Belongs to the cytochrome P450 family.</text>
</comment>